<name>Y5921_DICDI</name>
<proteinExistence type="predicted"/>
<keyword id="KW-1185">Reference proteome</keyword>
<accession>Q54VZ6</accession>
<feature type="chain" id="PRO_0000352437" description="Putative uncharacterized protein DDB_G0279993">
    <location>
        <begin position="1"/>
        <end position="54"/>
    </location>
</feature>
<organism>
    <name type="scientific">Dictyostelium discoideum</name>
    <name type="common">Social amoeba</name>
    <dbReference type="NCBI Taxonomy" id="44689"/>
    <lineage>
        <taxon>Eukaryota</taxon>
        <taxon>Amoebozoa</taxon>
        <taxon>Evosea</taxon>
        <taxon>Eumycetozoa</taxon>
        <taxon>Dictyostelia</taxon>
        <taxon>Dictyosteliales</taxon>
        <taxon>Dictyosteliaceae</taxon>
        <taxon>Dictyostelium</taxon>
    </lineage>
</organism>
<dbReference type="EMBL" id="AAFI02000035">
    <property type="protein sequence ID" value="EAL67468.1"/>
    <property type="molecule type" value="Genomic_DNA"/>
</dbReference>
<dbReference type="RefSeq" id="XP_641454.1">
    <property type="nucleotide sequence ID" value="XM_636362.1"/>
</dbReference>
<dbReference type="SMR" id="Q54VZ6"/>
<dbReference type="PaxDb" id="44689-DDB0205921"/>
<dbReference type="EnsemblProtists" id="EAL67468">
    <property type="protein sequence ID" value="EAL67468"/>
    <property type="gene ID" value="DDB_G0279993"/>
</dbReference>
<dbReference type="GeneID" id="8622340"/>
<dbReference type="KEGG" id="ddi:DDB_G0279993"/>
<dbReference type="dictyBase" id="DDB_G0279993"/>
<dbReference type="VEuPathDB" id="AmoebaDB:DDB_G0279993"/>
<dbReference type="HOGENOM" id="CLU_3054359_0_0_1"/>
<dbReference type="InParanoid" id="Q54VZ6"/>
<dbReference type="PRO" id="PR:Q54VZ6"/>
<dbReference type="Proteomes" id="UP000002195">
    <property type="component" value="Chromosome 3"/>
</dbReference>
<protein>
    <recommendedName>
        <fullName>Putative uncharacterized protein DDB_G0279993</fullName>
    </recommendedName>
</protein>
<gene>
    <name type="ORF">DDB_G0279993</name>
</gene>
<reference key="1">
    <citation type="journal article" date="2005" name="Nature">
        <title>The genome of the social amoeba Dictyostelium discoideum.</title>
        <authorList>
            <person name="Eichinger L."/>
            <person name="Pachebat J.A."/>
            <person name="Gloeckner G."/>
            <person name="Rajandream M.A."/>
            <person name="Sucgang R."/>
            <person name="Berriman M."/>
            <person name="Song J."/>
            <person name="Olsen R."/>
            <person name="Szafranski K."/>
            <person name="Xu Q."/>
            <person name="Tunggal B."/>
            <person name="Kummerfeld S."/>
            <person name="Madera M."/>
            <person name="Konfortov B.A."/>
            <person name="Rivero F."/>
            <person name="Bankier A.T."/>
            <person name="Lehmann R."/>
            <person name="Hamlin N."/>
            <person name="Davies R."/>
            <person name="Gaudet P."/>
            <person name="Fey P."/>
            <person name="Pilcher K."/>
            <person name="Chen G."/>
            <person name="Saunders D."/>
            <person name="Sodergren E.J."/>
            <person name="Davis P."/>
            <person name="Kerhornou A."/>
            <person name="Nie X."/>
            <person name="Hall N."/>
            <person name="Anjard C."/>
            <person name="Hemphill L."/>
            <person name="Bason N."/>
            <person name="Farbrother P."/>
            <person name="Desany B."/>
            <person name="Just E."/>
            <person name="Morio T."/>
            <person name="Rost R."/>
            <person name="Churcher C.M."/>
            <person name="Cooper J."/>
            <person name="Haydock S."/>
            <person name="van Driessche N."/>
            <person name="Cronin A."/>
            <person name="Goodhead I."/>
            <person name="Muzny D.M."/>
            <person name="Mourier T."/>
            <person name="Pain A."/>
            <person name="Lu M."/>
            <person name="Harper D."/>
            <person name="Lindsay R."/>
            <person name="Hauser H."/>
            <person name="James K.D."/>
            <person name="Quiles M."/>
            <person name="Madan Babu M."/>
            <person name="Saito T."/>
            <person name="Buchrieser C."/>
            <person name="Wardroper A."/>
            <person name="Felder M."/>
            <person name="Thangavelu M."/>
            <person name="Johnson D."/>
            <person name="Knights A."/>
            <person name="Loulseged H."/>
            <person name="Mungall K.L."/>
            <person name="Oliver K."/>
            <person name="Price C."/>
            <person name="Quail M.A."/>
            <person name="Urushihara H."/>
            <person name="Hernandez J."/>
            <person name="Rabbinowitsch E."/>
            <person name="Steffen D."/>
            <person name="Sanders M."/>
            <person name="Ma J."/>
            <person name="Kohara Y."/>
            <person name="Sharp S."/>
            <person name="Simmonds M.N."/>
            <person name="Spiegler S."/>
            <person name="Tivey A."/>
            <person name="Sugano S."/>
            <person name="White B."/>
            <person name="Walker D."/>
            <person name="Woodward J.R."/>
            <person name="Winckler T."/>
            <person name="Tanaka Y."/>
            <person name="Shaulsky G."/>
            <person name="Schleicher M."/>
            <person name="Weinstock G.M."/>
            <person name="Rosenthal A."/>
            <person name="Cox E.C."/>
            <person name="Chisholm R.L."/>
            <person name="Gibbs R.A."/>
            <person name="Loomis W.F."/>
            <person name="Platzer M."/>
            <person name="Kay R.R."/>
            <person name="Williams J.G."/>
            <person name="Dear P.H."/>
            <person name="Noegel A.A."/>
            <person name="Barrell B.G."/>
            <person name="Kuspa A."/>
        </authorList>
    </citation>
    <scope>NUCLEOTIDE SEQUENCE [LARGE SCALE GENOMIC DNA]</scope>
    <source>
        <strain>AX4</strain>
    </source>
</reference>
<sequence length="54" mass="6851">MKLYISPPQTLEYLKFEYRHFPFKACEYLKFQNLHQYIRWYYQLFPLMVQLVAL</sequence>